<dbReference type="EC" id="4.2.3.152" evidence="2"/>
<dbReference type="EMBL" id="AY753181">
    <property type="protein sequence ID" value="AAW88569.1"/>
    <property type="molecule type" value="Genomic_DNA"/>
</dbReference>
<dbReference type="EMBL" id="DQ164098">
    <property type="protein sequence ID" value="ABA41506.1"/>
    <property type="molecule type" value="Genomic_DNA"/>
</dbReference>
<dbReference type="EMBL" id="CP003275">
    <property type="protein sequence ID" value="AEY85554.1"/>
    <property type="molecule type" value="Genomic_DNA"/>
</dbReference>
<dbReference type="PDB" id="4P53">
    <property type="method" value="X-ray"/>
    <property type="resolution" value="2.10 A"/>
    <property type="chains" value="A=1-414"/>
</dbReference>
<dbReference type="PDBsum" id="4P53"/>
<dbReference type="SMR" id="H2K887"/>
<dbReference type="STRING" id="1133850.SHJG_0276"/>
<dbReference type="KEGG" id="shy:SHJG_0276"/>
<dbReference type="PATRIC" id="fig|1133850.20.peg.416"/>
<dbReference type="eggNOG" id="COG0337">
    <property type="taxonomic scope" value="Bacteria"/>
</dbReference>
<dbReference type="HOGENOM" id="CLU_001201_0_4_11"/>
<dbReference type="OrthoDB" id="9806583at2"/>
<dbReference type="BioCyc" id="MetaCyc:MONOMER-13772"/>
<dbReference type="BRENDA" id="4.2.3.152">
    <property type="organism ID" value="6043"/>
</dbReference>
<dbReference type="EvolutionaryTrace" id="H2K887"/>
<dbReference type="GO" id="GO:0003856">
    <property type="term" value="F:3-dehydroquinate synthase activity"/>
    <property type="evidence" value="ECO:0007669"/>
    <property type="project" value="TreeGrafter"/>
</dbReference>
<dbReference type="GO" id="GO:0046872">
    <property type="term" value="F:metal ion binding"/>
    <property type="evidence" value="ECO:0007669"/>
    <property type="project" value="UniProtKB-KW"/>
</dbReference>
<dbReference type="GO" id="GO:0000166">
    <property type="term" value="F:nucleotide binding"/>
    <property type="evidence" value="ECO:0007669"/>
    <property type="project" value="UniProtKB-KW"/>
</dbReference>
<dbReference type="GO" id="GO:0017000">
    <property type="term" value="P:antibiotic biosynthetic process"/>
    <property type="evidence" value="ECO:0007669"/>
    <property type="project" value="UniProtKB-KW"/>
</dbReference>
<dbReference type="CDD" id="cd08199">
    <property type="entry name" value="EEVS"/>
    <property type="match status" value="1"/>
</dbReference>
<dbReference type="Gene3D" id="3.40.50.1970">
    <property type="match status" value="1"/>
</dbReference>
<dbReference type="Gene3D" id="1.20.1090.10">
    <property type="entry name" value="Dehydroquinate synthase-like - alpha domain"/>
    <property type="match status" value="1"/>
</dbReference>
<dbReference type="InterPro" id="IPR050071">
    <property type="entry name" value="Dehydroquinate_synthase"/>
</dbReference>
<dbReference type="InterPro" id="IPR030960">
    <property type="entry name" value="DHQS/DOIS_N"/>
</dbReference>
<dbReference type="InterPro" id="IPR056179">
    <property type="entry name" value="DHQS_C"/>
</dbReference>
<dbReference type="InterPro" id="IPR035872">
    <property type="entry name" value="EEVS-like"/>
</dbReference>
<dbReference type="PANTHER" id="PTHR43622:SF3">
    <property type="entry name" value="2-EPI-5-EPI-VALIOLONE SYNTHASE"/>
    <property type="match status" value="1"/>
</dbReference>
<dbReference type="PANTHER" id="PTHR43622">
    <property type="entry name" value="3-DEHYDROQUINATE SYNTHASE"/>
    <property type="match status" value="1"/>
</dbReference>
<dbReference type="Pfam" id="PF01761">
    <property type="entry name" value="DHQ_synthase"/>
    <property type="match status" value="1"/>
</dbReference>
<dbReference type="Pfam" id="PF24621">
    <property type="entry name" value="DHQS_C"/>
    <property type="match status" value="1"/>
</dbReference>
<dbReference type="SUPFAM" id="SSF56796">
    <property type="entry name" value="Dehydroquinate synthase-like"/>
    <property type="match status" value="1"/>
</dbReference>
<sequence>MTMTKQSSLSPGSRLYDYTTQDGAAWRVSALKEVSYDVVVQPRLLDPANPALADALSSGTTPARRLIVIDATVRSLYGEQLAAYLAGHDVEFHLCVIDAHESAKVMETVFEVVDAMDAFGVPRRHAPVLAMGGGVLTDIVGLAASLYRRATPYVRIPTTLIGMIDAGIGAKTGVNFREHKNRLGTYHPSSLTLIDPGFLATLDARHLRNGLAEILKVALVKDAELFDLLEGHGASLVEQRMQPGEGGTGGAALTVLRRAVQGMLEELQPNLWEHQLRRLVDFGHSFSPSVEMAALPELLHGEAVCIDMALSSVLAHHRGLLTEAELGRVLDVMRLLHLPVLHPVCTPDLMRAALADTVKHRDGWQHMPLPRGIGDAVFVNDVTQREIEAALLTLAERDRVPRWRALHGAVDMGV</sequence>
<feature type="chain" id="PRO_0000435440" description="2-epi-5-epi-valiolone synthase">
    <location>
        <begin position="1"/>
        <end position="414"/>
    </location>
</feature>
<feature type="active site" evidence="1">
    <location>
        <position position="171"/>
    </location>
</feature>
<feature type="binding site" evidence="3">
    <location>
        <position position="70"/>
    </location>
    <ligand>
        <name>NAD(+)</name>
        <dbReference type="ChEBI" id="CHEBI:57540"/>
    </ligand>
</feature>
<feature type="binding site" evidence="3">
    <location>
        <begin position="101"/>
        <end position="104"/>
    </location>
    <ligand>
        <name>NAD(+)</name>
        <dbReference type="ChEBI" id="CHEBI:57540"/>
    </ligand>
</feature>
<feature type="binding site" evidence="3">
    <location>
        <begin position="134"/>
        <end position="138"/>
    </location>
    <ligand>
        <name>NAD(+)</name>
        <dbReference type="ChEBI" id="CHEBI:57540"/>
    </ligand>
</feature>
<feature type="binding site" evidence="3">
    <location>
        <begin position="158"/>
        <end position="159"/>
    </location>
    <ligand>
        <name>NAD(+)</name>
        <dbReference type="ChEBI" id="CHEBI:57540"/>
    </ligand>
</feature>
<feature type="binding site" evidence="3">
    <location>
        <position position="171"/>
    </location>
    <ligand>
        <name>NAD(+)</name>
        <dbReference type="ChEBI" id="CHEBI:57540"/>
    </ligand>
</feature>
<feature type="binding site" evidence="3">
    <location>
        <position position="180"/>
    </location>
    <ligand>
        <name>NAD(+)</name>
        <dbReference type="ChEBI" id="CHEBI:57540"/>
    </ligand>
</feature>
<feature type="binding site" evidence="3">
    <location>
        <begin position="198"/>
        <end position="201"/>
    </location>
    <ligand>
        <name>NAD(+)</name>
        <dbReference type="ChEBI" id="CHEBI:57540"/>
    </ligand>
</feature>
<feature type="binding site" evidence="3">
    <location>
        <position position="213"/>
    </location>
    <ligand>
        <name>Zn(2+)</name>
        <dbReference type="ChEBI" id="CHEBI:29105"/>
    </ligand>
</feature>
<feature type="binding site" evidence="3">
    <location>
        <position position="284"/>
    </location>
    <ligand>
        <name>Zn(2+)</name>
        <dbReference type="ChEBI" id="CHEBI:29105"/>
    </ligand>
</feature>
<feature type="binding site" evidence="3">
    <location>
        <position position="300"/>
    </location>
    <ligand>
        <name>Zn(2+)</name>
        <dbReference type="ChEBI" id="CHEBI:29105"/>
    </ligand>
</feature>
<feature type="strand" evidence="9">
    <location>
        <begin position="37"/>
        <end position="40"/>
    </location>
</feature>
<feature type="helix" evidence="9">
    <location>
        <begin position="53"/>
        <end position="56"/>
    </location>
</feature>
<feature type="strand" evidence="9">
    <location>
        <begin position="64"/>
        <end position="70"/>
    </location>
</feature>
<feature type="helix" evidence="9">
    <location>
        <begin position="71"/>
        <end position="87"/>
    </location>
</feature>
<feature type="strand" evidence="9">
    <location>
        <begin position="91"/>
        <end position="97"/>
    </location>
</feature>
<feature type="helix" evidence="9">
    <location>
        <begin position="101"/>
        <end position="103"/>
    </location>
</feature>
<feature type="helix" evidence="9">
    <location>
        <begin position="106"/>
        <end position="119"/>
    </location>
</feature>
<feature type="strand" evidence="9">
    <location>
        <begin position="123"/>
        <end position="126"/>
    </location>
</feature>
<feature type="strand" evidence="9">
    <location>
        <begin position="128"/>
        <end position="133"/>
    </location>
</feature>
<feature type="helix" evidence="9">
    <location>
        <begin position="134"/>
        <end position="146"/>
    </location>
</feature>
<feature type="helix" evidence="9">
    <location>
        <begin position="147"/>
        <end position="149"/>
    </location>
</feature>
<feature type="strand" evidence="9">
    <location>
        <begin position="153"/>
        <end position="157"/>
    </location>
</feature>
<feature type="helix" evidence="9">
    <location>
        <begin position="160"/>
        <end position="164"/>
    </location>
</feature>
<feature type="turn" evidence="9">
    <location>
        <begin position="165"/>
        <end position="168"/>
    </location>
</feature>
<feature type="strand" evidence="9">
    <location>
        <begin position="169"/>
        <end position="176"/>
    </location>
</feature>
<feature type="strand" evidence="9">
    <location>
        <begin position="179"/>
        <end position="186"/>
    </location>
</feature>
<feature type="strand" evidence="9">
    <location>
        <begin position="190"/>
        <end position="194"/>
    </location>
</feature>
<feature type="helix" evidence="9">
    <location>
        <begin position="196"/>
        <end position="201"/>
    </location>
</feature>
<feature type="helix" evidence="9">
    <location>
        <begin position="204"/>
        <end position="221"/>
    </location>
</feature>
<feature type="helix" evidence="9">
    <location>
        <begin position="223"/>
        <end position="238"/>
    </location>
</feature>
<feature type="turn" evidence="9">
    <location>
        <begin position="239"/>
        <end position="241"/>
    </location>
</feature>
<feature type="helix" evidence="9">
    <location>
        <begin position="251"/>
        <end position="267"/>
    </location>
</feature>
<feature type="helix" evidence="9">
    <location>
        <begin position="268"/>
        <end position="270"/>
    </location>
</feature>
<feature type="helix" evidence="9">
    <location>
        <begin position="279"/>
        <end position="281"/>
    </location>
</feature>
<feature type="helix" evidence="9">
    <location>
        <begin position="287"/>
        <end position="294"/>
    </location>
</feature>
<feature type="helix" evidence="9">
    <location>
        <begin position="300"/>
        <end position="317"/>
    </location>
</feature>
<feature type="helix" evidence="9">
    <location>
        <begin position="323"/>
        <end position="335"/>
    </location>
</feature>
<feature type="helix" evidence="9">
    <location>
        <begin position="347"/>
        <end position="360"/>
    </location>
</feature>
<feature type="turn" evidence="9">
    <location>
        <begin position="361"/>
        <end position="363"/>
    </location>
</feature>
<feature type="strand" evidence="9">
    <location>
        <begin position="367"/>
        <end position="372"/>
    </location>
</feature>
<feature type="strand" evidence="9">
    <location>
        <begin position="376"/>
        <end position="380"/>
    </location>
</feature>
<feature type="helix" evidence="9">
    <location>
        <begin position="384"/>
        <end position="397"/>
    </location>
</feature>
<protein>
    <recommendedName>
        <fullName evidence="4">2-epi-5-epi-valiolone synthase</fullName>
        <shortName evidence="5">EEVS</shortName>
        <ecNumber evidence="2">4.2.3.152</ecNumber>
    </recommendedName>
    <alternativeName>
        <fullName evidence="5">Sedoheptulose 7-phosphate cyclase</fullName>
    </alternativeName>
</protein>
<proteinExistence type="evidence at protein level"/>
<reference key="1">
    <citation type="journal article" date="2005" name="Appl. Environ. Microbiol.">
        <title>Gene cluster responsible for validamycin biosynthesis in Streptomyces hygroscopicus subsp. jinggangensis 5008.</title>
        <authorList>
            <person name="Yu Y."/>
            <person name="Bai L."/>
            <person name="Minagawa K."/>
            <person name="Jian X."/>
            <person name="Li L."/>
            <person name="Li J."/>
            <person name="Chen S."/>
            <person name="Cao E."/>
            <person name="Mahmud T."/>
            <person name="Floss H.G."/>
            <person name="Zhou X."/>
            <person name="Deng Z."/>
        </authorList>
    </citation>
    <scope>NUCLEOTIDE SEQUENCE [GENOMIC RNA]</scope>
    <scope>FUNCTION</scope>
    <scope>CATALYTIC ACTIVITY</scope>
    <scope>PATHWAY</scope>
    <scope>DISRUPTION PHENOTYPE</scope>
    <source>
        <strain>5008</strain>
    </source>
</reference>
<reference key="2">
    <citation type="journal article" date="2006" name="Chem. Biol.">
        <title>Functional analysis of the validamycin biosynthetic gene cluster and engineered production of validoxylamine A.</title>
        <authorList>
            <person name="Bai L."/>
            <person name="Li L."/>
            <person name="Xu H."/>
            <person name="Minagawa K."/>
            <person name="Yu Y."/>
            <person name="Zhang Y."/>
            <person name="Zhou X."/>
            <person name="Floss H.G."/>
            <person name="Mahmud T."/>
            <person name="Deng Z."/>
        </authorList>
    </citation>
    <scope>NUCLEOTIDE SEQUENCE [GENOMIC DNA]</scope>
    <source>
        <strain>5008</strain>
    </source>
</reference>
<reference key="3">
    <citation type="journal article" date="2012" name="BMC Genomics">
        <title>Genomic and transcriptomic insights into the thermo-regulated biosynthesis of validamycin in Streptomyces hygroscopicus 5008.</title>
        <authorList>
            <person name="Wu H."/>
            <person name="Qu S."/>
            <person name="Lu C."/>
            <person name="Zheng H."/>
            <person name="Zhou X."/>
            <person name="Bai L."/>
            <person name="Deng Z."/>
        </authorList>
    </citation>
    <scope>NUCLEOTIDE SEQUENCE [LARGE SCALE GENOMIC DNA]</scope>
    <source>
        <strain>5008</strain>
    </source>
</reference>
<reference evidence="8" key="4">
    <citation type="journal article" date="2014" name="Biochemistry">
        <title>Structure of a sedoheptulose 7-phosphate cyclase: ValA from Streptomyces hygroscopicus.</title>
        <authorList>
            <person name="Kean K.M."/>
            <person name="Codding S.J."/>
            <person name="Asamizu S."/>
            <person name="Mahmud T."/>
            <person name="Karplus P.A."/>
        </authorList>
    </citation>
    <scope>X-RAY CRYSTALLOGRAPHY (2.10 ANGSTROMS) IN COMPLEX WITH NAD AND ZINC</scope>
    <scope>COFACTOR</scope>
</reference>
<organism>
    <name type="scientific">Streptomyces hygroscopicus subsp. jinggangensis (strain 5008)</name>
    <dbReference type="NCBI Taxonomy" id="1133850"/>
    <lineage>
        <taxon>Bacteria</taxon>
        <taxon>Bacillati</taxon>
        <taxon>Actinomycetota</taxon>
        <taxon>Actinomycetes</taxon>
        <taxon>Kitasatosporales</taxon>
        <taxon>Streptomycetaceae</taxon>
        <taxon>Streptomyces</taxon>
        <taxon>Streptomyces violaceusniger group</taxon>
    </lineage>
</organism>
<gene>
    <name evidence="4" type="primary">valA</name>
    <name evidence="7" type="ordered locus">SHJG_0276</name>
</gene>
<evidence type="ECO:0000250" key="1">
    <source>
        <dbReference type="UniProtKB" id="Q9S5E2"/>
    </source>
</evidence>
<evidence type="ECO:0000269" key="2">
    <source>
    </source>
</evidence>
<evidence type="ECO:0000269" key="3">
    <source>
    </source>
</evidence>
<evidence type="ECO:0000303" key="4">
    <source>
    </source>
</evidence>
<evidence type="ECO:0000303" key="5">
    <source>
    </source>
</evidence>
<evidence type="ECO:0000305" key="6"/>
<evidence type="ECO:0000312" key="7">
    <source>
        <dbReference type="EMBL" id="AEY85554.1"/>
    </source>
</evidence>
<evidence type="ECO:0007744" key="8">
    <source>
        <dbReference type="PDB" id="4P53"/>
    </source>
</evidence>
<evidence type="ECO:0007829" key="9">
    <source>
        <dbReference type="PDB" id="4P53"/>
    </source>
</evidence>
<name>VALA_STRHJ</name>
<accession>H2K887</accession>
<accession>Q3T6E4</accession>
<comment type="function">
    <text evidence="2">Catalyzes the cyclization of D-sedoheptulose 7-phosphate to 2-epi-5-epi-valiolone. Involved in validamycin biosynthesis.</text>
</comment>
<comment type="catalytic activity">
    <reaction evidence="2">
        <text>D-sedoheptulose 7-phosphate = 2-epi-5-epi-valiolone + phosphate</text>
        <dbReference type="Rhea" id="RHEA:44184"/>
        <dbReference type="ChEBI" id="CHEBI:43474"/>
        <dbReference type="ChEBI" id="CHEBI:57483"/>
        <dbReference type="ChEBI" id="CHEBI:84187"/>
        <dbReference type="EC" id="4.2.3.152"/>
    </reaction>
</comment>
<comment type="cofactor">
    <cofactor evidence="3">
        <name>NAD(+)</name>
        <dbReference type="ChEBI" id="CHEBI:57540"/>
    </cofactor>
</comment>
<comment type="cofactor">
    <cofactor evidence="3">
        <name>Zn(2+)</name>
        <dbReference type="ChEBI" id="CHEBI:29105"/>
    </cofactor>
</comment>
<comment type="pathway">
    <text evidence="2">Antibiotic biosynthesis.</text>
</comment>
<comment type="disruption phenotype">
    <text evidence="2">Deletion abolishes validamycin production.</text>
</comment>
<comment type="similarity">
    <text evidence="6">Belongs to the sugar phosphate cyclases superfamily. EEVS family.</text>
</comment>
<keyword id="KW-0002">3D-structure</keyword>
<keyword id="KW-0045">Antibiotic biosynthesis</keyword>
<keyword id="KW-0456">Lyase</keyword>
<keyword id="KW-0479">Metal-binding</keyword>
<keyword id="KW-0520">NAD</keyword>
<keyword id="KW-0547">Nucleotide-binding</keyword>
<keyword id="KW-0862">Zinc</keyword>